<organism>
    <name type="scientific">Plestiodon skiltonianus</name>
    <name type="common">Western skink</name>
    <name type="synonym">Eumeces skiltonianus</name>
    <dbReference type="NCBI Taxonomy" id="463545"/>
    <lineage>
        <taxon>Eukaryota</taxon>
        <taxon>Metazoa</taxon>
        <taxon>Chordata</taxon>
        <taxon>Craniata</taxon>
        <taxon>Vertebrata</taxon>
        <taxon>Euteleostomi</taxon>
        <taxon>Lepidosauria</taxon>
        <taxon>Squamata</taxon>
        <taxon>Bifurcata</taxon>
        <taxon>Unidentata</taxon>
        <taxon>Scinciformata</taxon>
        <taxon>Scincidae</taxon>
        <taxon>Scincinae</taxon>
        <taxon>Plestiodon</taxon>
    </lineage>
</organism>
<evidence type="ECO:0000250" key="1">
    <source>
        <dbReference type="UniProtKB" id="P27467"/>
    </source>
</evidence>
<evidence type="ECO:0000250" key="2">
    <source>
        <dbReference type="UniProtKB" id="P28026"/>
    </source>
</evidence>
<evidence type="ECO:0000250" key="3">
    <source>
        <dbReference type="UniProtKB" id="P56704"/>
    </source>
</evidence>
<evidence type="ECO:0000255" key="4"/>
<evidence type="ECO:0000305" key="5"/>
<sequence length="116" mass="13002">SGSCSLKTCWLQLADFRKVGDLLKEKYDSAAAMRISRKGKLELVNNRFNSPTPEDLVYVDPSPDYCLRNETTGSLGTQGRLCNKTSEGMDGCELMCCGRGYDQFKSVQVERCHCKF</sequence>
<feature type="chain" id="PRO_0000200633" description="Protein Wnt-5b">
    <location>
        <begin position="1" status="less than"/>
        <end position="116" status="greater than"/>
    </location>
</feature>
<feature type="lipid moiety-binding region" description="O-palmitoleoyl serine; by PORCN" evidence="3">
    <location>
        <position position="1"/>
    </location>
</feature>
<feature type="glycosylation site" description="N-linked (GlcNAc...) asparagine" evidence="4">
    <location>
        <position position="69"/>
    </location>
</feature>
<feature type="glycosylation site" description="N-linked (GlcNAc...) asparagine" evidence="4">
    <location>
        <position position="83"/>
    </location>
</feature>
<feature type="disulfide bond" evidence="2">
    <location>
        <begin position="82"/>
        <end position="97"/>
    </location>
</feature>
<feature type="non-terminal residue">
    <location>
        <position position="1"/>
    </location>
</feature>
<feature type="non-terminal residue">
    <location>
        <position position="116"/>
    </location>
</feature>
<reference key="1">
    <citation type="journal article" date="1992" name="Proc. Natl. Acad. Sci. U.S.A.">
        <title>Diversification of the Wnt gene family on the ancestral lineage of vertebrates.</title>
        <authorList>
            <person name="Sidow A."/>
        </authorList>
    </citation>
    <scope>NUCLEOTIDE SEQUENCE [GENOMIC DNA]</scope>
</reference>
<dbReference type="EMBL" id="M91280">
    <property type="protein sequence ID" value="AAA49258.1"/>
    <property type="molecule type" value="Genomic_DNA"/>
</dbReference>
<dbReference type="SMR" id="P28118"/>
<dbReference type="GlyCosmos" id="P28118">
    <property type="glycosylation" value="2 sites, No reported glycans"/>
</dbReference>
<dbReference type="GO" id="GO:0005615">
    <property type="term" value="C:extracellular space"/>
    <property type="evidence" value="ECO:0007669"/>
    <property type="project" value="TreeGrafter"/>
</dbReference>
<dbReference type="GO" id="GO:0005125">
    <property type="term" value="F:cytokine activity"/>
    <property type="evidence" value="ECO:0007669"/>
    <property type="project" value="TreeGrafter"/>
</dbReference>
<dbReference type="GO" id="GO:0005109">
    <property type="term" value="F:frizzled binding"/>
    <property type="evidence" value="ECO:0007669"/>
    <property type="project" value="TreeGrafter"/>
</dbReference>
<dbReference type="GO" id="GO:0060070">
    <property type="term" value="P:canonical Wnt signaling pathway"/>
    <property type="evidence" value="ECO:0007669"/>
    <property type="project" value="TreeGrafter"/>
</dbReference>
<dbReference type="GO" id="GO:0045165">
    <property type="term" value="P:cell fate commitment"/>
    <property type="evidence" value="ECO:0007669"/>
    <property type="project" value="TreeGrafter"/>
</dbReference>
<dbReference type="GO" id="GO:0042692">
    <property type="term" value="P:muscle cell differentiation"/>
    <property type="evidence" value="ECO:0000250"/>
    <property type="project" value="UniProtKB"/>
</dbReference>
<dbReference type="GO" id="GO:0030182">
    <property type="term" value="P:neuron differentiation"/>
    <property type="evidence" value="ECO:0007669"/>
    <property type="project" value="TreeGrafter"/>
</dbReference>
<dbReference type="GO" id="GO:1904105">
    <property type="term" value="P:positive regulation of convergent extension involved in gastrulation"/>
    <property type="evidence" value="ECO:0000250"/>
    <property type="project" value="UniProtKB"/>
</dbReference>
<dbReference type="GO" id="GO:2000052">
    <property type="term" value="P:positive regulation of non-canonical Wnt signaling pathway"/>
    <property type="evidence" value="ECO:0000250"/>
    <property type="project" value="UniProtKB"/>
</dbReference>
<dbReference type="Gene3D" id="3.30.2460.20">
    <property type="match status" value="1"/>
</dbReference>
<dbReference type="InterPro" id="IPR005817">
    <property type="entry name" value="Wnt"/>
</dbReference>
<dbReference type="InterPro" id="IPR043158">
    <property type="entry name" value="Wnt_C"/>
</dbReference>
<dbReference type="PANTHER" id="PTHR12027:SF87">
    <property type="entry name" value="PROTEIN WNT-5B"/>
    <property type="match status" value="1"/>
</dbReference>
<dbReference type="PANTHER" id="PTHR12027">
    <property type="entry name" value="WNT RELATED"/>
    <property type="match status" value="1"/>
</dbReference>
<dbReference type="Pfam" id="PF00110">
    <property type="entry name" value="wnt"/>
    <property type="match status" value="1"/>
</dbReference>
<dbReference type="SMART" id="SM00097">
    <property type="entry name" value="WNT1"/>
    <property type="match status" value="1"/>
</dbReference>
<keyword id="KW-0217">Developmental protein</keyword>
<keyword id="KW-1015">Disulfide bond</keyword>
<keyword id="KW-0272">Extracellular matrix</keyword>
<keyword id="KW-0325">Glycoprotein</keyword>
<keyword id="KW-0449">Lipoprotein</keyword>
<keyword id="KW-0964">Secreted</keyword>
<keyword id="KW-0879">Wnt signaling pathway</keyword>
<proteinExistence type="inferred from homology"/>
<name>WNT5B_PLESK</name>
<gene>
    <name type="primary">WNT-5B</name>
</gene>
<protein>
    <recommendedName>
        <fullName>Protein Wnt-5b</fullName>
    </recommendedName>
</protein>
<comment type="function">
    <text>Ligand for members of the frizzled family of seven transmembrane receptors. Probable developmental protein. May be a signaling molecule which affects the development of discrete regions of tissues. Is likely to signal over only few cell diameters.</text>
</comment>
<comment type="subcellular location">
    <subcellularLocation>
        <location>Secreted</location>
        <location>Extracellular space</location>
        <location>Extracellular matrix</location>
    </subcellularLocation>
</comment>
<comment type="PTM">
    <text evidence="1 3">Palmitoleoylation is required for efficient binding to frizzled receptors. Depalmitoleoylation leads to Wnt signaling pathway inhibition.</text>
</comment>
<comment type="similarity">
    <text evidence="5">Belongs to the Wnt family.</text>
</comment>
<accession>P28118</accession>